<organism>
    <name type="scientific">Solanum bulbocastanum</name>
    <name type="common">Wild potato</name>
    <dbReference type="NCBI Taxonomy" id="147425"/>
    <lineage>
        <taxon>Eukaryota</taxon>
        <taxon>Viridiplantae</taxon>
        <taxon>Streptophyta</taxon>
        <taxon>Embryophyta</taxon>
        <taxon>Tracheophyta</taxon>
        <taxon>Spermatophyta</taxon>
        <taxon>Magnoliopsida</taxon>
        <taxon>eudicotyledons</taxon>
        <taxon>Gunneridae</taxon>
        <taxon>Pentapetalae</taxon>
        <taxon>asterids</taxon>
        <taxon>lamiids</taxon>
        <taxon>Solanales</taxon>
        <taxon>Solanaceae</taxon>
        <taxon>Solanoideae</taxon>
        <taxon>Solaneae</taxon>
        <taxon>Solanum</taxon>
    </lineage>
</organism>
<comment type="function">
    <text evidence="1">This protein binds specifically to 23S rRNA.</text>
</comment>
<comment type="function">
    <text evidence="1">The globular domain of the protein is located near the polypeptide exit tunnel on the outside of the subunit, while an extended beta-hairpin is found that lines the wall of the exit tunnel in the center of the 70S ribosome.</text>
</comment>
<comment type="subunit">
    <text evidence="1">Part of the 50S ribosomal subunit.</text>
</comment>
<comment type="subcellular location">
    <subcellularLocation>
        <location>Plastid</location>
        <location>Chloroplast</location>
    </subcellularLocation>
</comment>
<comment type="similarity">
    <text evidence="2">Belongs to the universal ribosomal protein uL22 family.</text>
</comment>
<reference key="1">
    <citation type="journal article" date="2006" name="Theor. Appl. Genet.">
        <title>Complete chloroplast genome sequences of Solanum bulbocastanum, Solanum lycopersicum and comparative analyses with other Solanaceae genomes.</title>
        <authorList>
            <person name="Daniell H."/>
            <person name="Lee S.-B."/>
            <person name="Grevich J."/>
            <person name="Saski C."/>
            <person name="Quesada-Vargas T."/>
            <person name="Guda C."/>
            <person name="Tomkins J."/>
            <person name="Jansen R.K."/>
        </authorList>
    </citation>
    <scope>NUCLEOTIDE SEQUENCE [LARGE SCALE GENOMIC DNA]</scope>
    <source>
        <strain>cv. PT29</strain>
    </source>
</reference>
<feature type="chain" id="PRO_0000243245" description="Large ribosomal subunit protein uL22c">
    <location>
        <begin position="1"/>
        <end position="155"/>
    </location>
</feature>
<evidence type="ECO:0000250" key="1"/>
<evidence type="ECO:0000305" key="2"/>
<keyword id="KW-0150">Chloroplast</keyword>
<keyword id="KW-0934">Plastid</keyword>
<keyword id="KW-0687">Ribonucleoprotein</keyword>
<keyword id="KW-0689">Ribosomal protein</keyword>
<keyword id="KW-0694">RNA-binding</keyword>
<keyword id="KW-0699">rRNA-binding</keyword>
<gene>
    <name type="primary">rpl22</name>
</gene>
<protein>
    <recommendedName>
        <fullName evidence="2">Large ribosomal subunit protein uL22c</fullName>
    </recommendedName>
    <alternativeName>
        <fullName>50S ribosomal protein L22, chloroplastic</fullName>
    </alternativeName>
</protein>
<accession>Q2MIE8</accession>
<dbReference type="EMBL" id="DQ347958">
    <property type="protein sequence ID" value="ABC56252.1"/>
    <property type="molecule type" value="Genomic_DNA"/>
</dbReference>
<dbReference type="RefSeq" id="YP_538889.1">
    <property type="nucleotide sequence ID" value="NC_007943.1"/>
</dbReference>
<dbReference type="SMR" id="Q2MIE8"/>
<dbReference type="GeneID" id="3989422"/>
<dbReference type="GO" id="GO:0009507">
    <property type="term" value="C:chloroplast"/>
    <property type="evidence" value="ECO:0007669"/>
    <property type="project" value="UniProtKB-SubCell"/>
</dbReference>
<dbReference type="GO" id="GO:0015934">
    <property type="term" value="C:large ribosomal subunit"/>
    <property type="evidence" value="ECO:0007669"/>
    <property type="project" value="InterPro"/>
</dbReference>
<dbReference type="GO" id="GO:0019843">
    <property type="term" value="F:rRNA binding"/>
    <property type="evidence" value="ECO:0007669"/>
    <property type="project" value="UniProtKB-UniRule"/>
</dbReference>
<dbReference type="GO" id="GO:0003735">
    <property type="term" value="F:structural constituent of ribosome"/>
    <property type="evidence" value="ECO:0007669"/>
    <property type="project" value="InterPro"/>
</dbReference>
<dbReference type="GO" id="GO:0006412">
    <property type="term" value="P:translation"/>
    <property type="evidence" value="ECO:0007669"/>
    <property type="project" value="UniProtKB-UniRule"/>
</dbReference>
<dbReference type="CDD" id="cd00336">
    <property type="entry name" value="Ribosomal_L22"/>
    <property type="match status" value="1"/>
</dbReference>
<dbReference type="FunFam" id="3.90.470.10:FF:000006">
    <property type="entry name" value="50S ribosomal protein L22, chloroplastic"/>
    <property type="match status" value="1"/>
</dbReference>
<dbReference type="Gene3D" id="3.90.470.10">
    <property type="entry name" value="Ribosomal protein L22/L17"/>
    <property type="match status" value="1"/>
</dbReference>
<dbReference type="HAMAP" id="MF_01331_B">
    <property type="entry name" value="Ribosomal_uL22_B"/>
    <property type="match status" value="1"/>
</dbReference>
<dbReference type="InterPro" id="IPR001063">
    <property type="entry name" value="Ribosomal_uL22"/>
</dbReference>
<dbReference type="InterPro" id="IPR005727">
    <property type="entry name" value="Ribosomal_uL22_bac/chlpt-type"/>
</dbReference>
<dbReference type="InterPro" id="IPR047867">
    <property type="entry name" value="Ribosomal_uL22_bac/org-type"/>
</dbReference>
<dbReference type="InterPro" id="IPR018260">
    <property type="entry name" value="Ribosomal_uL22_CS"/>
</dbReference>
<dbReference type="InterPro" id="IPR036394">
    <property type="entry name" value="Ribosomal_uL22_sf"/>
</dbReference>
<dbReference type="NCBIfam" id="TIGR01044">
    <property type="entry name" value="rplV_bact"/>
    <property type="match status" value="1"/>
</dbReference>
<dbReference type="PANTHER" id="PTHR13501">
    <property type="entry name" value="CHLOROPLAST 50S RIBOSOMAL PROTEIN L22-RELATED"/>
    <property type="match status" value="1"/>
</dbReference>
<dbReference type="PANTHER" id="PTHR13501:SF10">
    <property type="entry name" value="LARGE RIBOSOMAL SUBUNIT PROTEIN UL22M"/>
    <property type="match status" value="1"/>
</dbReference>
<dbReference type="Pfam" id="PF00237">
    <property type="entry name" value="Ribosomal_L22"/>
    <property type="match status" value="1"/>
</dbReference>
<dbReference type="SUPFAM" id="SSF54843">
    <property type="entry name" value="Ribosomal protein L22"/>
    <property type="match status" value="1"/>
</dbReference>
<dbReference type="PROSITE" id="PS00464">
    <property type="entry name" value="RIBOSOMAL_L22"/>
    <property type="match status" value="1"/>
</dbReference>
<sequence length="155" mass="17744">MLKKKKTEVYALGEHISMSADKARRVIDQIRGRSYEETLMILELMPYRACYPILKLVYSAAANASYNMGSSETNLVISKAEVNEGTTVKKLKPRARGRSFPIKRSTCHITIVMKDISLDDEYGEMSSLKKTRWKKKSTAMTYRDMYNSGGLWDKK</sequence>
<name>RK22_SOLBU</name>
<geneLocation type="chloroplast"/>
<proteinExistence type="inferred from homology"/>